<comment type="function">
    <text evidence="1">Component of the class I major histocompatibility complex (MHC). Involved in the presentation of peptide antigens to the immune system (By similarity).</text>
</comment>
<comment type="subunit">
    <text evidence="1">Heterodimer of an alpha chain and a beta chain. Beta-2-microglobulin is the beta-chain of major histocompatibility complex class I molecules (By similarity).</text>
</comment>
<comment type="subcellular location">
    <subcellularLocation>
        <location evidence="1">Secreted</location>
    </subcellularLocation>
</comment>
<comment type="similarity">
    <text evidence="3">Belongs to the beta-2-microglobulin family.</text>
</comment>
<accession>Q8SPW0</accession>
<accession>Q4R7B2</accession>
<protein>
    <recommendedName>
        <fullName>Beta-2-microglobulin</fullName>
    </recommendedName>
</protein>
<gene>
    <name type="primary">B2M</name>
    <name type="ORF">QtsA-15719</name>
</gene>
<proteinExistence type="inferred from homology"/>
<evidence type="ECO:0000250" key="1"/>
<evidence type="ECO:0000255" key="2">
    <source>
        <dbReference type="PROSITE-ProRule" id="PRU00114"/>
    </source>
</evidence>
<evidence type="ECO:0000305" key="3"/>
<sequence length="119" mass="13567">MSPSVALAVLALLSLSGLEAIQRTPKIQVYSRHPPENGKPNFLNCYVSGFHPSDIEVDLLKNGEKMGKVEHSDLSFSKDWSFYLLYYTEFTPNEKDEYACRVNHVTLSGPRTVKWDRDM</sequence>
<name>B2MG_MACFA</name>
<feature type="signal peptide" evidence="1">
    <location>
        <begin position="1"/>
        <end position="20"/>
    </location>
</feature>
<feature type="chain" id="PRO_0000018783" description="Beta-2-microglobulin">
    <location>
        <begin position="21"/>
        <end position="119"/>
    </location>
</feature>
<feature type="domain" description="Ig-like C1-type">
    <location>
        <begin position="25"/>
        <end position="114"/>
    </location>
</feature>
<feature type="disulfide bond" evidence="2">
    <location>
        <begin position="45"/>
        <end position="100"/>
    </location>
</feature>
<keyword id="KW-1015">Disulfide bond</keyword>
<keyword id="KW-0391">Immunity</keyword>
<keyword id="KW-0393">Immunoglobulin domain</keyword>
<keyword id="KW-0490">MHC I</keyword>
<keyword id="KW-1185">Reference proteome</keyword>
<keyword id="KW-0964">Secreted</keyword>
<keyword id="KW-0732">Signal</keyword>
<organism>
    <name type="scientific">Macaca fascicularis</name>
    <name type="common">Crab-eating macaque</name>
    <name type="synonym">Cynomolgus monkey</name>
    <dbReference type="NCBI Taxonomy" id="9541"/>
    <lineage>
        <taxon>Eukaryota</taxon>
        <taxon>Metazoa</taxon>
        <taxon>Chordata</taxon>
        <taxon>Craniata</taxon>
        <taxon>Vertebrata</taxon>
        <taxon>Euteleostomi</taxon>
        <taxon>Mammalia</taxon>
        <taxon>Eutheria</taxon>
        <taxon>Euarchontoglires</taxon>
        <taxon>Primates</taxon>
        <taxon>Haplorrhini</taxon>
        <taxon>Catarrhini</taxon>
        <taxon>Cercopithecidae</taxon>
        <taxon>Cercopithecinae</taxon>
        <taxon>Macaca</taxon>
    </lineage>
</organism>
<dbReference type="EMBL" id="AF485817">
    <property type="protein sequence ID" value="AAL92100.1"/>
    <property type="molecule type" value="mRNA"/>
</dbReference>
<dbReference type="EMBL" id="AB168908">
    <property type="protein sequence ID" value="BAE01010.1"/>
    <property type="molecule type" value="mRNA"/>
</dbReference>
<dbReference type="SMR" id="Q8SPW0"/>
<dbReference type="STRING" id="9541.ENSMFAP00000035740"/>
<dbReference type="Ensembl" id="ENSMFAT00000101229.1">
    <property type="protein sequence ID" value="ENSMFAP00000047025.1"/>
    <property type="gene ID" value="ENSMFAG00000034244.2"/>
</dbReference>
<dbReference type="eggNOG" id="ENOG502S8GM">
    <property type="taxonomic scope" value="Eukaryota"/>
</dbReference>
<dbReference type="GeneTree" id="ENSGT00690000102227"/>
<dbReference type="Proteomes" id="UP000233100">
    <property type="component" value="Chromosome 7"/>
</dbReference>
<dbReference type="Bgee" id="ENSMFAG00000034244">
    <property type="expression patterns" value="Expressed in spleen and 13 other cell types or tissues"/>
</dbReference>
<dbReference type="GO" id="GO:0005576">
    <property type="term" value="C:extracellular region"/>
    <property type="evidence" value="ECO:0007669"/>
    <property type="project" value="UniProtKB-SubCell"/>
</dbReference>
<dbReference type="GO" id="GO:0042612">
    <property type="term" value="C:MHC class I protein complex"/>
    <property type="evidence" value="ECO:0007669"/>
    <property type="project" value="UniProtKB-KW"/>
</dbReference>
<dbReference type="GO" id="GO:0002474">
    <property type="term" value="P:antigen processing and presentation of peptide antigen via MHC class I"/>
    <property type="evidence" value="ECO:0007669"/>
    <property type="project" value="UniProtKB-KW"/>
</dbReference>
<dbReference type="GO" id="GO:0006955">
    <property type="term" value="P:immune response"/>
    <property type="evidence" value="ECO:0007669"/>
    <property type="project" value="InterPro"/>
</dbReference>
<dbReference type="CDD" id="cd05770">
    <property type="entry name" value="IgC1_beta2m"/>
    <property type="match status" value="1"/>
</dbReference>
<dbReference type="FunFam" id="2.60.40.10:FF:001005">
    <property type="entry name" value="Beta-2-microglobulin"/>
    <property type="match status" value="1"/>
</dbReference>
<dbReference type="Gene3D" id="2.60.40.10">
    <property type="entry name" value="Immunoglobulins"/>
    <property type="match status" value="1"/>
</dbReference>
<dbReference type="InterPro" id="IPR015707">
    <property type="entry name" value="B2Microglobulin"/>
</dbReference>
<dbReference type="InterPro" id="IPR007110">
    <property type="entry name" value="Ig-like_dom"/>
</dbReference>
<dbReference type="InterPro" id="IPR036179">
    <property type="entry name" value="Ig-like_dom_sf"/>
</dbReference>
<dbReference type="InterPro" id="IPR013783">
    <property type="entry name" value="Ig-like_fold"/>
</dbReference>
<dbReference type="InterPro" id="IPR003006">
    <property type="entry name" value="Ig/MHC_CS"/>
</dbReference>
<dbReference type="InterPro" id="IPR003597">
    <property type="entry name" value="Ig_C1-set"/>
</dbReference>
<dbReference type="InterPro" id="IPR050160">
    <property type="entry name" value="MHC/Immunoglobulin"/>
</dbReference>
<dbReference type="PANTHER" id="PTHR19944:SF62">
    <property type="entry name" value="BETA-2-MICROGLOBULIN"/>
    <property type="match status" value="1"/>
</dbReference>
<dbReference type="PANTHER" id="PTHR19944">
    <property type="entry name" value="MHC CLASS II-RELATED"/>
    <property type="match status" value="1"/>
</dbReference>
<dbReference type="Pfam" id="PF07654">
    <property type="entry name" value="C1-set"/>
    <property type="match status" value="1"/>
</dbReference>
<dbReference type="SMART" id="SM00407">
    <property type="entry name" value="IGc1"/>
    <property type="match status" value="1"/>
</dbReference>
<dbReference type="SUPFAM" id="SSF48726">
    <property type="entry name" value="Immunoglobulin"/>
    <property type="match status" value="1"/>
</dbReference>
<dbReference type="PROSITE" id="PS50835">
    <property type="entry name" value="IG_LIKE"/>
    <property type="match status" value="1"/>
</dbReference>
<dbReference type="PROSITE" id="PS00290">
    <property type="entry name" value="IG_MHC"/>
    <property type="match status" value="1"/>
</dbReference>
<reference key="1">
    <citation type="submission" date="2002-02" db="EMBL/GenBank/DDBJ databases">
        <title>Binding of human IgG to cynomolgus FcR.</title>
        <authorList>
            <person name="Namenuk A.K."/>
            <person name="Hong K."/>
            <person name="Meng Y.G."/>
            <person name="Shields R.L."/>
            <person name="Cromwell M.E.M."/>
            <person name="Presta L.G."/>
        </authorList>
    </citation>
    <scope>NUCLEOTIDE SEQUENCE [MRNA]</scope>
    <source>
        <tissue>Spleen</tissue>
    </source>
</reference>
<reference key="2">
    <citation type="submission" date="2005-06" db="EMBL/GenBank/DDBJ databases">
        <title>DNA sequences of macaque genes expressed in brain or testis and its evolutionary implications.</title>
        <authorList>
            <consortium name="International consortium for macaque cDNA sequencing and analysis"/>
        </authorList>
    </citation>
    <scope>NUCLEOTIDE SEQUENCE [LARGE SCALE MRNA]</scope>
    <source>
        <tissue>Testis</tissue>
    </source>
</reference>